<reference evidence="7" key="1">
    <citation type="journal article" date="2013" name="Toxicon">
        <title>Venom proteomic and venomous glands transcriptomic analysis of the Egyptian scorpion Scorpio maurus palmatus (Arachnida: Scorpionidae).</title>
        <authorList>
            <person name="Abdel-Rahman M.A."/>
            <person name="Quintero-Hernandez V."/>
            <person name="Possani L.D."/>
        </authorList>
    </citation>
    <scope>NUCLEOTIDE SEQUENCE [MRNA]</scope>
    <source>
        <tissue>Venom gland</tissue>
    </source>
</reference>
<reference key="2">
    <citation type="journal article" date="2016" name="Toxicon">
        <title>Characterisation of three alpha-helical antimicrobial peptides from the venom of Scorpio maurus palmatus.</title>
        <authorList>
            <person name="Harrison P.L."/>
            <person name="Abdel-Rahman M.A."/>
            <person name="Strong P.N."/>
            <person name="Tawfik M.M."/>
            <person name="Miller K."/>
        </authorList>
    </citation>
    <scope>FUNCTION</scope>
    <scope>SYNTHESIS OF 23-46</scope>
    <scope>MUTAGENESIS OF PRO-36 AND 43-LYS--SER-46</scope>
    <scope>SUBCELLULAR LOCATION</scope>
    <scope>CIRCULAR DICHROISM ANALYSIS</scope>
</reference>
<reference key="3">
    <citation type="journal article" date="2016" name="Biochim. Biophys. Acta">
        <title>Phospholipid dependent mechanism of smp24, an alpha-helical antimicrobial peptide from scorpion venom.</title>
        <authorList>
            <person name="Harrison P.L."/>
            <person name="Heath G.R."/>
            <person name="Johnson B.R.G."/>
            <person name="Abdel-Rahman M.A."/>
            <person name="Strong P.N."/>
            <person name="Evans S.D."/>
            <person name="Miller K."/>
        </authorList>
    </citation>
    <scope>FUNCTION</scope>
    <scope>SYNTHESIS OF 23-46</scope>
</reference>
<dbReference type="EMBL" id="JZ469095">
    <property type="status" value="NOT_ANNOTATED_CDS"/>
    <property type="molecule type" value="mRNA"/>
</dbReference>
<organism>
    <name type="scientific">Scorpio palmatus</name>
    <name type="common">Israeli golden scorpion</name>
    <name type="synonym">Scorpio maurus palmatus</name>
    <dbReference type="NCBI Taxonomy" id="1662106"/>
    <lineage>
        <taxon>Eukaryota</taxon>
        <taxon>Metazoa</taxon>
        <taxon>Ecdysozoa</taxon>
        <taxon>Arthropoda</taxon>
        <taxon>Chelicerata</taxon>
        <taxon>Arachnida</taxon>
        <taxon>Scorpiones</taxon>
        <taxon>Iurida</taxon>
        <taxon>Scorpionoidea</taxon>
        <taxon>Scorpionidae</taxon>
        <taxon>Scorpioninae</taxon>
        <taxon>Scorpio</taxon>
    </lineage>
</organism>
<sequence>MQYKTFLVIFMAYLLVTHEAEAIWSFLIKAATKLLPSLFGGGKKDSSKRKRDVEDFFDPYQRDLDLELERLLSQLQ</sequence>
<proteinExistence type="evidence at protein level"/>
<keyword id="KW-0027">Amidation</keyword>
<keyword id="KW-0044">Antibiotic</keyword>
<keyword id="KW-0929">Antimicrobial</keyword>
<keyword id="KW-0204">Cytolysis</keyword>
<keyword id="KW-0295">Fungicide</keyword>
<keyword id="KW-0472">Membrane</keyword>
<keyword id="KW-0964">Secreted</keyword>
<keyword id="KW-0732">Signal</keyword>
<keyword id="KW-1052">Target cell membrane</keyword>
<keyword id="KW-1053">Target membrane</keyword>
<accession>P0DY16</accession>
<name>NDB34_SCOPA</name>
<comment type="function">
    <text evidence="2 3">Peptide that shows antimicrobial activity, moderate cytolysis on eukaryote cells and interference with DNA synthesis (PubMed:27019370). Has potent activity against Gram-positive bacteria and moderate activity against Gram-negative bacteria, as well as moderate activity against fungi (PubMed:27019370). Acts by inducing bacterial membrane disruption (PubMed:27019370). Uses multiple modes of action depending on the membrane lipid composition (PubMed:27480803). Uses a toroidal pore mechanism against the prokaryotic like membrane and forms hexagonal phase non-lamellar structures in eukaryotic-like membrane (PubMed:27480803). Shows activity against B.subtilis (MIC=4 ug/ml), S.epidermidis (MIC=8 ug/ml), S.aureus (MIC=8 ug/ml), E.coli (MIC=64 ug/ml), K.pneumoniae (MIC=128 ug/ml), P.aeruginosa (MIC=256 ug/ml), and C.albicans (MIC=32 ug/ml) (PubMed:27019370). Shows moderate hemolysis activity (PubMed:27019370).</text>
</comment>
<comment type="subcellular location">
    <subcellularLocation>
        <location evidence="6">Secreted</location>
    </subcellularLocation>
    <subcellularLocation>
        <location evidence="2">Target cell membrane</location>
    </subcellularLocation>
</comment>
<comment type="tissue specificity">
    <text evidence="6">Expressed by the venom gland.</text>
</comment>
<comment type="domain">
    <text evidence="2">Amphipathic and cationic peptide with an alpha-helical structure in membrane-mimicking environment.</text>
</comment>
<comment type="similarity">
    <text evidence="5">Belongs to the non-disulfide-bridged peptide (NDBP) superfamily. Medium-length antimicrobial peptide (group 3) family.</text>
</comment>
<feature type="signal peptide" evidence="1">
    <location>
        <begin position="1"/>
        <end position="22"/>
    </location>
</feature>
<feature type="peptide" id="PRO_0000461909" description="Antimicrobial peptide Smp24" evidence="6">
    <location>
        <begin position="23"/>
        <end position="46"/>
    </location>
</feature>
<feature type="propeptide" id="PRO_0000461910" evidence="6">
    <location>
        <begin position="47"/>
        <end position="76"/>
    </location>
</feature>
<feature type="mutagenesis site" description="No important change in antimicrobial and hemolytic activities." evidence="2">
    <original>P</original>
    <variation>GVG</variation>
    <location>
        <position position="36"/>
    </location>
</feature>
<feature type="mutagenesis site" description="No important change in antimicrobial activity. important decrease in hemolytic activity." evidence="2">
    <location>
        <begin position="43"/>
        <end position="46"/>
    </location>
</feature>
<protein>
    <recommendedName>
        <fullName evidence="4">Antimicrobial peptide Smp24</fullName>
    </recommendedName>
</protein>
<evidence type="ECO:0000255" key="1"/>
<evidence type="ECO:0000269" key="2">
    <source>
    </source>
</evidence>
<evidence type="ECO:0000269" key="3">
    <source>
    </source>
</evidence>
<evidence type="ECO:0000303" key="4">
    <source>
    </source>
</evidence>
<evidence type="ECO:0000305" key="5"/>
<evidence type="ECO:0000305" key="6">
    <source>
    </source>
</evidence>
<evidence type="ECO:0000312" key="7">
    <source>
        <dbReference type="EMBL" id="JZ469095"/>
    </source>
</evidence>